<proteinExistence type="evidence at protein level"/>
<evidence type="ECO:0000250" key="1">
    <source>
        <dbReference type="UniProtKB" id="Q8BXR9"/>
    </source>
</evidence>
<evidence type="ECO:0000255" key="2">
    <source>
        <dbReference type="PROSITE-ProRule" id="PRU00145"/>
    </source>
</evidence>
<evidence type="ECO:0000256" key="3">
    <source>
        <dbReference type="SAM" id="MobiDB-lite"/>
    </source>
</evidence>
<evidence type="ECO:0000269" key="4">
    <source>
    </source>
</evidence>
<evidence type="ECO:0000269" key="5">
    <source>
    </source>
</evidence>
<evidence type="ECO:0000269" key="6">
    <source>
    </source>
</evidence>
<evidence type="ECO:0000269" key="7">
    <source>
    </source>
</evidence>
<evidence type="ECO:0000303" key="8">
    <source>
    </source>
</evidence>
<evidence type="ECO:0000303" key="9">
    <source>
    </source>
</evidence>
<evidence type="ECO:0000303" key="10">
    <source ref="3"/>
</evidence>
<evidence type="ECO:0000303" key="11">
    <source ref="5"/>
</evidence>
<evidence type="ECO:0000305" key="12"/>
<evidence type="ECO:0007744" key="13">
    <source>
    </source>
</evidence>
<evidence type="ECO:0007744" key="14">
    <source>
    </source>
</evidence>
<comment type="function">
    <text evidence="1 5 6">Regulates cellular transport and efflux of cholesterol (PubMed:26941018). Plays a role in phosphatidylinositol-4-phophate (PI4P) turnover at the neuronal membrane (By similarity). Binds via its PH domain PI4P, phosphatidylinositol-4,5-diphosphate, phosphatidylinositol-3,4,5-triphosphate, and phosphatidic acid (By similarity). Weakly binds 25-hydroxycholesterol (PubMed:17428193).</text>
</comment>
<comment type="subunit">
    <text evidence="1">Homodimer (By similarity). Interacts with OSBPL3 (By similarity).</text>
</comment>
<comment type="interaction">
    <interactant intactId="EBI-2372709">
        <id>Q9BZF3</id>
    </interactant>
    <interactant intactId="EBI-6248094">
        <id>Q9Q2G4</id>
        <label>ORF</label>
    </interactant>
    <organismsDiffer>true</organismsDiffer>
    <experiments>3</experiments>
</comment>
<comment type="interaction">
    <interactant intactId="EBI-10698423">
        <id>Q9BZF3-6</id>
    </interactant>
    <interactant intactId="EBI-948266">
        <id>O14901</id>
        <label>KLF11</label>
    </interactant>
    <organismsDiffer>false</organismsDiffer>
    <experiments>3</experiments>
</comment>
<comment type="subcellular location">
    <subcellularLocation>
        <location evidence="4 7">Cytoplasm</location>
        <location evidence="4 7">Cytosol</location>
    </subcellularLocation>
    <subcellularLocation>
        <location evidence="4 6 7">Endoplasmic reticulum membrane</location>
        <topology evidence="12">Peripheral membrane protein</topology>
    </subcellularLocation>
    <subcellularLocation>
        <location evidence="4">Nucleus envelope</location>
    </subcellularLocation>
    <subcellularLocation>
        <location evidence="4 7">Cell membrane</location>
        <topology evidence="12">Peripheral membrane protein</topology>
    </subcellularLocation>
    <subcellularLocation>
        <location evidence="6">Endosome membrane</location>
        <topology evidence="12">Peripheral membrane protein</topology>
    </subcellularLocation>
    <text evidence="1">Co-localizes with OSBPL3 at contact sites between the plasma membrane and the endoplasmic reticulum.</text>
</comment>
<comment type="alternative products">
    <event type="alternative splicing"/>
    <isoform>
        <id>Q9BZF3-1</id>
        <name>1</name>
        <sequence type="displayed"/>
    </isoform>
    <isoform>
        <id>Q9BZF3-2</id>
        <name>2</name>
        <sequence type="described" ref="VSP_010013"/>
    </isoform>
    <isoform>
        <id>Q9BZF3-3</id>
        <name>3</name>
        <sequence type="described" ref="VSP_036559 VSP_036561"/>
    </isoform>
    <isoform>
        <id>Q9BZF3-4</id>
        <name>4</name>
        <sequence type="described" ref="VSP_036560"/>
    </isoform>
    <isoform>
        <id>Q9BZF3-5</id>
        <name>5</name>
        <sequence type="described" ref="VSP_036561"/>
    </isoform>
    <isoform>
        <id>Q9BZF3-6</id>
        <name>6</name>
        <sequence type="described" ref="VSP_036560 VSP_010013 VSP_054430 VSP_054431"/>
    </isoform>
</comment>
<comment type="tissue specificity">
    <text>Expressed in brain and striated muscle (at protein level) (PubMed:14593528). Widely expressed (PubMed:11735225). Expressed in skeletal muscle (PubMed:14593528).</text>
</comment>
<comment type="developmental stage">
    <text evidence="4">Expressed in fetal brain and lung.</text>
</comment>
<comment type="induction">
    <text evidence="6">By acetylated low-density lipoprotein.</text>
</comment>
<comment type="similarity">
    <text evidence="12">Belongs to the OSBP family.</text>
</comment>
<comment type="sequence caution" evidence="12">
    <conflict type="erroneous initiation">
        <sequence resource="EMBL-CDS" id="BAB55223"/>
    </conflict>
</comment>
<comment type="sequence caution" evidence="12">
    <conflict type="erroneous initiation">
        <sequence resource="EMBL-CDS" id="BAD92135"/>
    </conflict>
</comment>
<keyword id="KW-0007">Acetylation</keyword>
<keyword id="KW-0025">Alternative splicing</keyword>
<keyword id="KW-1003">Cell membrane</keyword>
<keyword id="KW-0963">Cytoplasm</keyword>
<keyword id="KW-0256">Endoplasmic reticulum</keyword>
<keyword id="KW-0967">Endosome</keyword>
<keyword id="KW-0445">Lipid transport</keyword>
<keyword id="KW-0446">Lipid-binding</keyword>
<keyword id="KW-0472">Membrane</keyword>
<keyword id="KW-0539">Nucleus</keyword>
<keyword id="KW-0597">Phosphoprotein</keyword>
<keyword id="KW-1267">Proteomics identification</keyword>
<keyword id="KW-1185">Reference proteome</keyword>
<keyword id="KW-0813">Transport</keyword>
<organism>
    <name type="scientific">Homo sapiens</name>
    <name type="common">Human</name>
    <dbReference type="NCBI Taxonomy" id="9606"/>
    <lineage>
        <taxon>Eukaryota</taxon>
        <taxon>Metazoa</taxon>
        <taxon>Chordata</taxon>
        <taxon>Craniata</taxon>
        <taxon>Vertebrata</taxon>
        <taxon>Euteleostomi</taxon>
        <taxon>Mammalia</taxon>
        <taxon>Eutheria</taxon>
        <taxon>Euarchontoglires</taxon>
        <taxon>Primates</taxon>
        <taxon>Haplorrhini</taxon>
        <taxon>Catarrhini</taxon>
        <taxon>Hominidae</taxon>
        <taxon>Homo</taxon>
    </lineage>
</organism>
<protein>
    <recommendedName>
        <fullName>Oxysterol-binding protein-related protein 6</fullName>
        <shortName>ORP-6</shortName>
        <shortName>OSBP-related protein 6</shortName>
    </recommendedName>
</protein>
<reference key="1">
    <citation type="journal article" date="2001" name="J. Lipid Res.">
        <title>The OSBP-related protein family in humans.</title>
        <authorList>
            <person name="Lehto M."/>
            <person name="Laitinen S."/>
            <person name="Chinetti G."/>
            <person name="Johansson M."/>
            <person name="Ehnholm C."/>
            <person name="Staels B."/>
            <person name="Ikonen E."/>
            <person name="Olkkonen V.M."/>
        </authorList>
    </citation>
    <scope>NUCLEOTIDE SEQUENCE [MRNA] (ISOFORM 1)</scope>
    <scope>TISSUE SPECIFICITY</scope>
</reference>
<reference key="2">
    <citation type="journal article" date="2001" name="Genomics">
        <title>A family of 12 human genes containing oxysterol-binding domains.</title>
        <authorList>
            <person name="Jaworski C.J."/>
            <person name="Moreira E."/>
            <person name="Li A."/>
            <person name="Lee R."/>
            <person name="Rodriguez I.R."/>
        </authorList>
    </citation>
    <scope>NUCLEOTIDE SEQUENCE [MRNA] (ISOFORM 1)</scope>
</reference>
<reference key="3">
    <citation type="submission" date="2001-12" db="EMBL/GenBank/DDBJ databases">
        <authorList>
            <person name="Guo J.H."/>
            <person name="Zan Q."/>
            <person name="Yu L."/>
        </authorList>
    </citation>
    <scope>NUCLEOTIDE SEQUENCE [LARGE SCALE MRNA] (ISOFORM 2)</scope>
</reference>
<reference key="4">
    <citation type="journal article" date="2004" name="Nat. Genet.">
        <title>Complete sequencing and characterization of 21,243 full-length human cDNAs.</title>
        <authorList>
            <person name="Ota T."/>
            <person name="Suzuki Y."/>
            <person name="Nishikawa T."/>
            <person name="Otsuki T."/>
            <person name="Sugiyama T."/>
            <person name="Irie R."/>
            <person name="Wakamatsu A."/>
            <person name="Hayashi K."/>
            <person name="Sato H."/>
            <person name="Nagai K."/>
            <person name="Kimura K."/>
            <person name="Makita H."/>
            <person name="Sekine M."/>
            <person name="Obayashi M."/>
            <person name="Nishi T."/>
            <person name="Shibahara T."/>
            <person name="Tanaka T."/>
            <person name="Ishii S."/>
            <person name="Yamamoto J."/>
            <person name="Saito K."/>
            <person name="Kawai Y."/>
            <person name="Isono Y."/>
            <person name="Nakamura Y."/>
            <person name="Nagahari K."/>
            <person name="Murakami K."/>
            <person name="Yasuda T."/>
            <person name="Iwayanagi T."/>
            <person name="Wagatsuma M."/>
            <person name="Shiratori A."/>
            <person name="Sudo H."/>
            <person name="Hosoiri T."/>
            <person name="Kaku Y."/>
            <person name="Kodaira H."/>
            <person name="Kondo H."/>
            <person name="Sugawara M."/>
            <person name="Takahashi M."/>
            <person name="Kanda K."/>
            <person name="Yokoi T."/>
            <person name="Furuya T."/>
            <person name="Kikkawa E."/>
            <person name="Omura Y."/>
            <person name="Abe K."/>
            <person name="Kamihara K."/>
            <person name="Katsuta N."/>
            <person name="Sato K."/>
            <person name="Tanikawa M."/>
            <person name="Yamazaki M."/>
            <person name="Ninomiya K."/>
            <person name="Ishibashi T."/>
            <person name="Yamashita H."/>
            <person name="Murakawa K."/>
            <person name="Fujimori K."/>
            <person name="Tanai H."/>
            <person name="Kimata M."/>
            <person name="Watanabe M."/>
            <person name="Hiraoka S."/>
            <person name="Chiba Y."/>
            <person name="Ishida S."/>
            <person name="Ono Y."/>
            <person name="Takiguchi S."/>
            <person name="Watanabe S."/>
            <person name="Yosida M."/>
            <person name="Hotuta T."/>
            <person name="Kusano J."/>
            <person name="Kanehori K."/>
            <person name="Takahashi-Fujii A."/>
            <person name="Hara H."/>
            <person name="Tanase T.-O."/>
            <person name="Nomura Y."/>
            <person name="Togiya S."/>
            <person name="Komai F."/>
            <person name="Hara R."/>
            <person name="Takeuchi K."/>
            <person name="Arita M."/>
            <person name="Imose N."/>
            <person name="Musashino K."/>
            <person name="Yuuki H."/>
            <person name="Oshima A."/>
            <person name="Sasaki N."/>
            <person name="Aotsuka S."/>
            <person name="Yoshikawa Y."/>
            <person name="Matsunawa H."/>
            <person name="Ichihara T."/>
            <person name="Shiohata N."/>
            <person name="Sano S."/>
            <person name="Moriya S."/>
            <person name="Momiyama H."/>
            <person name="Satoh N."/>
            <person name="Takami S."/>
            <person name="Terashima Y."/>
            <person name="Suzuki O."/>
            <person name="Nakagawa S."/>
            <person name="Senoh A."/>
            <person name="Mizoguchi H."/>
            <person name="Goto Y."/>
            <person name="Shimizu F."/>
            <person name="Wakebe H."/>
            <person name="Hishigaki H."/>
            <person name="Watanabe T."/>
            <person name="Sugiyama A."/>
            <person name="Takemoto M."/>
            <person name="Kawakami B."/>
            <person name="Yamazaki M."/>
            <person name="Watanabe K."/>
            <person name="Kumagai A."/>
            <person name="Itakura S."/>
            <person name="Fukuzumi Y."/>
            <person name="Fujimori Y."/>
            <person name="Komiyama M."/>
            <person name="Tashiro H."/>
            <person name="Tanigami A."/>
            <person name="Fujiwara T."/>
            <person name="Ono T."/>
            <person name="Yamada K."/>
            <person name="Fujii Y."/>
            <person name="Ozaki K."/>
            <person name="Hirao M."/>
            <person name="Ohmori Y."/>
            <person name="Kawabata A."/>
            <person name="Hikiji T."/>
            <person name="Kobatake N."/>
            <person name="Inagaki H."/>
            <person name="Ikema Y."/>
            <person name="Okamoto S."/>
            <person name="Okitani R."/>
            <person name="Kawakami T."/>
            <person name="Noguchi S."/>
            <person name="Itoh T."/>
            <person name="Shigeta K."/>
            <person name="Senba T."/>
            <person name="Matsumura K."/>
            <person name="Nakajima Y."/>
            <person name="Mizuno T."/>
            <person name="Morinaga M."/>
            <person name="Sasaki M."/>
            <person name="Togashi T."/>
            <person name="Oyama M."/>
            <person name="Hata H."/>
            <person name="Watanabe M."/>
            <person name="Komatsu T."/>
            <person name="Mizushima-Sugano J."/>
            <person name="Satoh T."/>
            <person name="Shirai Y."/>
            <person name="Takahashi Y."/>
            <person name="Nakagawa K."/>
            <person name="Okumura K."/>
            <person name="Nagase T."/>
            <person name="Nomura N."/>
            <person name="Kikuchi H."/>
            <person name="Masuho Y."/>
            <person name="Yamashita R."/>
            <person name="Nakai K."/>
            <person name="Yada T."/>
            <person name="Nakamura Y."/>
            <person name="Ohara O."/>
            <person name="Isogai T."/>
            <person name="Sugano S."/>
        </authorList>
    </citation>
    <scope>NUCLEOTIDE SEQUENCE [LARGE SCALE MRNA] (ISOFORMS 3 AND 4)</scope>
    <scope>NUCLEOTIDE SEQUENCE [LARGE SCALE MRNA] OF 195-934 (ISOFORM 1)</scope>
    <source>
        <tissue>Placenta</tissue>
        <tissue>Teratocarcinoma</tissue>
        <tissue>Trachea</tissue>
    </source>
</reference>
<reference key="5">
    <citation type="submission" date="2005-03" db="EMBL/GenBank/DDBJ databases">
        <authorList>
            <person name="Totoki Y."/>
            <person name="Toyoda A."/>
            <person name="Takeda T."/>
            <person name="Sakaki Y."/>
            <person name="Tanaka A."/>
            <person name="Yokoyama S."/>
            <person name="Ohara O."/>
            <person name="Nagase T."/>
            <person name="Kikuno R.F."/>
        </authorList>
    </citation>
    <scope>NUCLEOTIDE SEQUENCE [LARGE SCALE MRNA] (ISOFORM 5)</scope>
    <source>
        <tissue>Brain</tissue>
    </source>
</reference>
<reference key="6">
    <citation type="journal article" date="2005" name="Nature">
        <title>Generation and annotation of the DNA sequences of human chromosomes 2 and 4.</title>
        <authorList>
            <person name="Hillier L.W."/>
            <person name="Graves T.A."/>
            <person name="Fulton R.S."/>
            <person name="Fulton L.A."/>
            <person name="Pepin K.H."/>
            <person name="Minx P."/>
            <person name="Wagner-McPherson C."/>
            <person name="Layman D."/>
            <person name="Wylie K."/>
            <person name="Sekhon M."/>
            <person name="Becker M.C."/>
            <person name="Fewell G.A."/>
            <person name="Delehaunty K.D."/>
            <person name="Miner T.L."/>
            <person name="Nash W.E."/>
            <person name="Kremitzki C."/>
            <person name="Oddy L."/>
            <person name="Du H."/>
            <person name="Sun H."/>
            <person name="Bradshaw-Cordum H."/>
            <person name="Ali J."/>
            <person name="Carter J."/>
            <person name="Cordes M."/>
            <person name="Harris A."/>
            <person name="Isak A."/>
            <person name="van Brunt A."/>
            <person name="Nguyen C."/>
            <person name="Du F."/>
            <person name="Courtney L."/>
            <person name="Kalicki J."/>
            <person name="Ozersky P."/>
            <person name="Abbott S."/>
            <person name="Armstrong J."/>
            <person name="Belter E.A."/>
            <person name="Caruso L."/>
            <person name="Cedroni M."/>
            <person name="Cotton M."/>
            <person name="Davidson T."/>
            <person name="Desai A."/>
            <person name="Elliott G."/>
            <person name="Erb T."/>
            <person name="Fronick C."/>
            <person name="Gaige T."/>
            <person name="Haakenson W."/>
            <person name="Haglund K."/>
            <person name="Holmes A."/>
            <person name="Harkins R."/>
            <person name="Kim K."/>
            <person name="Kruchowski S.S."/>
            <person name="Strong C.M."/>
            <person name="Grewal N."/>
            <person name="Goyea E."/>
            <person name="Hou S."/>
            <person name="Levy A."/>
            <person name="Martinka S."/>
            <person name="Mead K."/>
            <person name="McLellan M.D."/>
            <person name="Meyer R."/>
            <person name="Randall-Maher J."/>
            <person name="Tomlinson C."/>
            <person name="Dauphin-Kohlberg S."/>
            <person name="Kozlowicz-Reilly A."/>
            <person name="Shah N."/>
            <person name="Swearengen-Shahid S."/>
            <person name="Snider J."/>
            <person name="Strong J.T."/>
            <person name="Thompson J."/>
            <person name="Yoakum M."/>
            <person name="Leonard S."/>
            <person name="Pearman C."/>
            <person name="Trani L."/>
            <person name="Radionenko M."/>
            <person name="Waligorski J.E."/>
            <person name="Wang C."/>
            <person name="Rock S.M."/>
            <person name="Tin-Wollam A.-M."/>
            <person name="Maupin R."/>
            <person name="Latreille P."/>
            <person name="Wendl M.C."/>
            <person name="Yang S.-P."/>
            <person name="Pohl C."/>
            <person name="Wallis J.W."/>
            <person name="Spieth J."/>
            <person name="Bieri T.A."/>
            <person name="Berkowicz N."/>
            <person name="Nelson J.O."/>
            <person name="Osborne J."/>
            <person name="Ding L."/>
            <person name="Meyer R."/>
            <person name="Sabo A."/>
            <person name="Shotland Y."/>
            <person name="Sinha P."/>
            <person name="Wohldmann P.E."/>
            <person name="Cook L.L."/>
            <person name="Hickenbotham M.T."/>
            <person name="Eldred J."/>
            <person name="Williams D."/>
            <person name="Jones T.A."/>
            <person name="She X."/>
            <person name="Ciccarelli F.D."/>
            <person name="Izaurralde E."/>
            <person name="Taylor J."/>
            <person name="Schmutz J."/>
            <person name="Myers R.M."/>
            <person name="Cox D.R."/>
            <person name="Huang X."/>
            <person name="McPherson J.D."/>
            <person name="Mardis E.R."/>
            <person name="Clifton S.W."/>
            <person name="Warren W.C."/>
            <person name="Chinwalla A.T."/>
            <person name="Eddy S.R."/>
            <person name="Marra M.A."/>
            <person name="Ovcharenko I."/>
            <person name="Furey T.S."/>
            <person name="Miller W."/>
            <person name="Eichler E.E."/>
            <person name="Bork P."/>
            <person name="Suyama M."/>
            <person name="Torrents D."/>
            <person name="Waterston R.H."/>
            <person name="Wilson R.K."/>
        </authorList>
    </citation>
    <scope>NUCLEOTIDE SEQUENCE [LARGE SCALE GENOMIC DNA]</scope>
</reference>
<reference key="7">
    <citation type="submission" date="2005-09" db="EMBL/GenBank/DDBJ databases">
        <authorList>
            <person name="Mural R.J."/>
            <person name="Istrail S."/>
            <person name="Sutton G.G."/>
            <person name="Florea L."/>
            <person name="Halpern A.L."/>
            <person name="Mobarry C.M."/>
            <person name="Lippert R."/>
            <person name="Walenz B."/>
            <person name="Shatkay H."/>
            <person name="Dew I."/>
            <person name="Miller J.R."/>
            <person name="Flanigan M.J."/>
            <person name="Edwards N.J."/>
            <person name="Bolanos R."/>
            <person name="Fasulo D."/>
            <person name="Halldorsson B.V."/>
            <person name="Hannenhalli S."/>
            <person name="Turner R."/>
            <person name="Yooseph S."/>
            <person name="Lu F."/>
            <person name="Nusskern D.R."/>
            <person name="Shue B.C."/>
            <person name="Zheng X.H."/>
            <person name="Zhong F."/>
            <person name="Delcher A.L."/>
            <person name="Huson D.H."/>
            <person name="Kravitz S.A."/>
            <person name="Mouchard L."/>
            <person name="Reinert K."/>
            <person name="Remington K.A."/>
            <person name="Clark A.G."/>
            <person name="Waterman M.S."/>
            <person name="Eichler E.E."/>
            <person name="Adams M.D."/>
            <person name="Hunkapiller M.W."/>
            <person name="Myers E.W."/>
            <person name="Venter J.C."/>
        </authorList>
    </citation>
    <scope>NUCLEOTIDE SEQUENCE [LARGE SCALE GENOMIC DNA]</scope>
</reference>
<reference key="8">
    <citation type="journal article" date="2004" name="Genome Res.">
        <title>The status, quality, and expansion of the NIH full-length cDNA project: the Mammalian Gene Collection (MGC).</title>
        <authorList>
            <consortium name="The MGC Project Team"/>
        </authorList>
    </citation>
    <scope>NUCLEOTIDE SEQUENCE [LARGE SCALE MRNA] (ISOFORM 6)</scope>
    <source>
        <tissue>Lung</tissue>
    </source>
</reference>
<reference key="9">
    <citation type="journal article" date="2004" name="Cell Tissue Res.">
        <title>Subfamily III of mammalian oxysterol-binding protein (OSBP) homologues: the expression and intracellular localization of ORP3, ORP6, and ORP7.</title>
        <authorList>
            <person name="Lehto M."/>
            <person name="Tienari J."/>
            <person name="Lehtonen S."/>
            <person name="Lehtonen E."/>
            <person name="Olkkonen V.M."/>
        </authorList>
    </citation>
    <scope>SUBCELLULAR LOCATION</scope>
    <scope>TISSUE SPECIFICITY</scope>
    <scope>DEVELOPMENTAL STAGE</scope>
</reference>
<reference key="10">
    <citation type="journal article" date="2007" name="Biochem. J.">
        <title>The mammalian oxysterol-binding protein-related proteins (ORPs) bind 25-hydroxycholesterol in an evolutionarily conserved pocket.</title>
        <authorList>
            <person name="Suchanek M."/>
            <person name="Hynynen R."/>
            <person name="Wohlfahrt G."/>
            <person name="Lehto M."/>
            <person name="Johansson M."/>
            <person name="Saarinen H."/>
            <person name="Radzikowska A."/>
            <person name="Thiele C."/>
            <person name="Olkkonen V.M."/>
        </authorList>
    </citation>
    <scope>FUNCTION</scope>
</reference>
<reference key="11">
    <citation type="journal article" date="2007" name="Science">
        <title>ATM and ATR substrate analysis reveals extensive protein networks responsive to DNA damage.</title>
        <authorList>
            <person name="Matsuoka S."/>
            <person name="Ballif B.A."/>
            <person name="Smogorzewska A."/>
            <person name="McDonald E.R. III"/>
            <person name="Hurov K.E."/>
            <person name="Luo J."/>
            <person name="Bakalarski C.E."/>
            <person name="Zhao Z."/>
            <person name="Solimini N."/>
            <person name="Lerenthal Y."/>
            <person name="Shiloh Y."/>
            <person name="Gygi S.P."/>
            <person name="Elledge S.J."/>
        </authorList>
    </citation>
    <scope>IDENTIFICATION BY MASS SPECTROMETRY [LARGE SCALE ANALYSIS]</scope>
    <source>
        <tissue>Embryonic kidney</tissue>
    </source>
</reference>
<reference key="12">
    <citation type="journal article" date="2008" name="Proc. Natl. Acad. Sci. U.S.A.">
        <title>A quantitative atlas of mitotic phosphorylation.</title>
        <authorList>
            <person name="Dephoure N."/>
            <person name="Zhou C."/>
            <person name="Villen J."/>
            <person name="Beausoleil S.A."/>
            <person name="Bakalarski C.E."/>
            <person name="Elledge S.J."/>
            <person name="Gygi S.P."/>
        </authorList>
    </citation>
    <scope>IDENTIFICATION BY MASS SPECTROMETRY [LARGE SCALE ANALYSIS]</scope>
    <source>
        <tissue>Cervix carcinoma</tissue>
    </source>
</reference>
<reference key="13">
    <citation type="journal article" date="2009" name="Anal. Chem.">
        <title>Lys-N and trypsin cover complementary parts of the phosphoproteome in a refined SCX-based approach.</title>
        <authorList>
            <person name="Gauci S."/>
            <person name="Helbig A.O."/>
            <person name="Slijper M."/>
            <person name="Krijgsveld J."/>
            <person name="Heck A.J."/>
            <person name="Mohammed S."/>
        </authorList>
    </citation>
    <scope>IDENTIFICATION BY MASS SPECTROMETRY [LARGE SCALE ANALYSIS]</scope>
</reference>
<reference key="14">
    <citation type="journal article" date="2009" name="Mol. Cell. Proteomics">
        <title>Large-scale proteomics analysis of the human kinome.</title>
        <authorList>
            <person name="Oppermann F.S."/>
            <person name="Gnad F."/>
            <person name="Olsen J.V."/>
            <person name="Hornberger R."/>
            <person name="Greff Z."/>
            <person name="Keri G."/>
            <person name="Mann M."/>
            <person name="Daub H."/>
        </authorList>
    </citation>
    <scope>ACETYLATION [LARGE SCALE ANALYSIS] AT SER-2</scope>
    <scope>CLEAVAGE OF INITIATOR METHIONINE [LARGE SCALE ANALYSIS]</scope>
    <scope>IDENTIFICATION BY MASS SPECTROMETRY [LARGE SCALE ANALYSIS]</scope>
</reference>
<reference key="15">
    <citation type="journal article" date="2013" name="J. Proteome Res.">
        <title>Toward a comprehensive characterization of a human cancer cell phosphoproteome.</title>
        <authorList>
            <person name="Zhou H."/>
            <person name="Di Palma S."/>
            <person name="Preisinger C."/>
            <person name="Peng M."/>
            <person name="Polat A.N."/>
            <person name="Heck A.J."/>
            <person name="Mohammed S."/>
        </authorList>
    </citation>
    <scope>PHOSPHORYLATION [LARGE SCALE ANALYSIS] AT SER-35; SER-190 AND SER-290</scope>
    <scope>IDENTIFICATION BY MASS SPECTROMETRY [LARGE SCALE ANALYSIS]</scope>
    <source>
        <tissue>Erythroleukemia</tissue>
    </source>
</reference>
<reference key="16">
    <citation type="journal article" date="2014" name="J. Proteomics">
        <title>An enzyme assisted RP-RPLC approach for in-depth analysis of human liver phosphoproteome.</title>
        <authorList>
            <person name="Bian Y."/>
            <person name="Song C."/>
            <person name="Cheng K."/>
            <person name="Dong M."/>
            <person name="Wang F."/>
            <person name="Huang J."/>
            <person name="Sun D."/>
            <person name="Wang L."/>
            <person name="Ye M."/>
            <person name="Zou H."/>
        </authorList>
    </citation>
    <scope>IDENTIFICATION BY MASS SPECTROMETRY [LARGE SCALE ANALYSIS]</scope>
    <source>
        <tissue>Liver</tissue>
    </source>
</reference>
<reference key="17">
    <citation type="journal article" date="2016" name="Arterioscler. Thromb. Vasc. Biol.">
        <title>miRNA Targeting of Oxysterol-Binding Protein-Like 6 Regulates Cholesterol Trafficking and Efflux.</title>
        <authorList>
            <person name="Ouimet M."/>
            <person name="Hennessy E.J."/>
            <person name="van Solingen C."/>
            <person name="Koelwyn G.J."/>
            <person name="Hussein M.A."/>
            <person name="Ramkhelawon B."/>
            <person name="Rayner K.J."/>
            <person name="Temel R.E."/>
            <person name="Perisic L."/>
            <person name="Hedin U."/>
            <person name="Maegdefessel L."/>
            <person name="Garabedian M.J."/>
            <person name="Holdt L.M."/>
            <person name="Teupser D."/>
            <person name="Moore K.J."/>
        </authorList>
    </citation>
    <scope>FUNCTION</scope>
    <scope>SUBCELLULAR LOCATION</scope>
    <scope>INDUCTION</scope>
</reference>
<reference key="18">
    <citation type="journal article" date="2018" name="Exp. Cell Res.">
        <title>Oxysterol-binding protein-related protein (ORP) 6 localizes to the ER and ER-plasma membrane contact sites and is involved in the turnover of PI4P in cerebellar granule neurons.</title>
        <authorList>
            <person name="Mochizuki S."/>
            <person name="Miki H."/>
            <person name="Zhou R."/>
            <person name="Kido Y."/>
            <person name="Nishimura W."/>
            <person name="Kikuchi M."/>
            <person name="Noda Y."/>
        </authorList>
    </citation>
    <scope>SUBCELLULAR LOCATION</scope>
</reference>
<accession>Q9BZF3</accession>
<accession>B4DTW1</accession>
<accession>C4AMC0</accession>
<accession>C4AME4</accession>
<accession>D3DPF6</accession>
<accession>D3DPF7</accession>
<accession>Q4ZG68</accession>
<accession>Q53T68</accession>
<accession>Q59H61</accession>
<accession>Q7Z4Q1</accession>
<accession>Q86V84</accession>
<accession>Q8N9T0</accession>
<accession>Q96SR1</accession>
<name>OSBL6_HUMAN</name>
<dbReference type="EMBL" id="AF323728">
    <property type="protein sequence ID" value="AAG53409.1"/>
    <property type="molecule type" value="mRNA"/>
</dbReference>
<dbReference type="EMBL" id="AF392448">
    <property type="protein sequence ID" value="AAL40661.1"/>
    <property type="molecule type" value="mRNA"/>
</dbReference>
<dbReference type="EMBL" id="AF462443">
    <property type="protein sequence ID" value="AAP97711.1"/>
    <property type="molecule type" value="mRNA"/>
</dbReference>
<dbReference type="EMBL" id="AK027600">
    <property type="protein sequence ID" value="BAB55223.1"/>
    <property type="status" value="ALT_INIT"/>
    <property type="molecule type" value="mRNA"/>
</dbReference>
<dbReference type="EMBL" id="AK093902">
    <property type="protein sequence ID" value="BAC04248.1"/>
    <property type="molecule type" value="mRNA"/>
</dbReference>
<dbReference type="EMBL" id="AK300389">
    <property type="protein sequence ID" value="BAG62123.1"/>
    <property type="molecule type" value="mRNA"/>
</dbReference>
<dbReference type="EMBL" id="AB208898">
    <property type="protein sequence ID" value="BAD92135.1"/>
    <property type="status" value="ALT_INIT"/>
    <property type="molecule type" value="mRNA"/>
</dbReference>
<dbReference type="EMBL" id="AC009948">
    <property type="protein sequence ID" value="AAX88881.1"/>
    <property type="molecule type" value="Genomic_DNA"/>
</dbReference>
<dbReference type="EMBL" id="AC011743">
    <property type="protein sequence ID" value="AAY15090.1"/>
    <property type="molecule type" value="Genomic_DNA"/>
</dbReference>
<dbReference type="EMBL" id="AC011238">
    <property type="status" value="NOT_ANNOTATED_CDS"/>
    <property type="molecule type" value="Genomic_DNA"/>
</dbReference>
<dbReference type="EMBL" id="CH471058">
    <property type="protein sequence ID" value="EAX11040.1"/>
    <property type="molecule type" value="Genomic_DNA"/>
</dbReference>
<dbReference type="EMBL" id="CH471058">
    <property type="protein sequence ID" value="EAX11041.1"/>
    <property type="molecule type" value="Genomic_DNA"/>
</dbReference>
<dbReference type="EMBL" id="CH471058">
    <property type="protein sequence ID" value="EAX11042.1"/>
    <property type="molecule type" value="Genomic_DNA"/>
</dbReference>
<dbReference type="EMBL" id="CH471058">
    <property type="protein sequence ID" value="EAX11043.1"/>
    <property type="molecule type" value="Genomic_DNA"/>
</dbReference>
<dbReference type="EMBL" id="BC052259">
    <property type="protein sequence ID" value="AAH52259.1"/>
    <property type="molecule type" value="mRNA"/>
</dbReference>
<dbReference type="CCDS" id="CCDS2277.1">
    <molecule id="Q9BZF3-1"/>
</dbReference>
<dbReference type="CCDS" id="CCDS2278.1">
    <molecule id="Q9BZF3-3"/>
</dbReference>
<dbReference type="CCDS" id="CCDS56150.1">
    <molecule id="Q9BZF3-5"/>
</dbReference>
<dbReference type="CCDS" id="CCDS56151.1">
    <molecule id="Q9BZF3-2"/>
</dbReference>
<dbReference type="CCDS" id="CCDS56152.1">
    <molecule id="Q9BZF3-4"/>
</dbReference>
<dbReference type="RefSeq" id="NP_001188409.1">
    <molecule id="Q9BZF3-5"/>
    <property type="nucleotide sequence ID" value="NM_001201480.2"/>
</dbReference>
<dbReference type="RefSeq" id="NP_001188410.1">
    <molecule id="Q9BZF3-4"/>
    <property type="nucleotide sequence ID" value="NM_001201481.2"/>
</dbReference>
<dbReference type="RefSeq" id="NP_001188411.1">
    <molecule id="Q9BZF3-2"/>
    <property type="nucleotide sequence ID" value="NM_001201482.2"/>
</dbReference>
<dbReference type="RefSeq" id="NP_115912.1">
    <molecule id="Q9BZF3-1"/>
    <property type="nucleotide sequence ID" value="NM_032523.4"/>
</dbReference>
<dbReference type="RefSeq" id="NP_665682.1">
    <molecule id="Q9BZF3-3"/>
    <property type="nucleotide sequence ID" value="NM_145739.3"/>
</dbReference>
<dbReference type="RefSeq" id="XP_016858755.1">
    <molecule id="Q9BZF3-5"/>
    <property type="nucleotide sequence ID" value="XM_017003266.2"/>
</dbReference>
<dbReference type="RefSeq" id="XP_016858756.1">
    <molecule id="Q9BZF3-5"/>
    <property type="nucleotide sequence ID" value="XM_017003267.3"/>
</dbReference>
<dbReference type="RefSeq" id="XP_016858759.1">
    <property type="nucleotide sequence ID" value="XM_017003270.1"/>
</dbReference>
<dbReference type="RefSeq" id="XP_016858760.1">
    <molecule id="Q9BZF3-2"/>
    <property type="nucleotide sequence ID" value="XM_017003271.3"/>
</dbReference>
<dbReference type="RefSeq" id="XP_047299080.1">
    <molecule id="Q9BZF3-5"/>
    <property type="nucleotide sequence ID" value="XM_047443124.1"/>
</dbReference>
<dbReference type="RefSeq" id="XP_047299082.1">
    <molecule id="Q9BZF3-1"/>
    <property type="nucleotide sequence ID" value="XM_047443126.1"/>
</dbReference>
<dbReference type="RefSeq" id="XP_047299083.1">
    <molecule id="Q9BZF3-1"/>
    <property type="nucleotide sequence ID" value="XM_047443127.1"/>
</dbReference>
<dbReference type="RefSeq" id="XP_047299085.1">
    <molecule id="Q9BZF3-1"/>
    <property type="nucleotide sequence ID" value="XM_047443129.1"/>
</dbReference>
<dbReference type="RefSeq" id="XP_047299086.1">
    <molecule id="Q9BZF3-1"/>
    <property type="nucleotide sequence ID" value="XM_047443130.1"/>
</dbReference>
<dbReference type="RefSeq" id="XP_047299087.1">
    <molecule id="Q9BZF3-1"/>
    <property type="nucleotide sequence ID" value="XM_047443131.1"/>
</dbReference>
<dbReference type="RefSeq" id="XP_047299088.1">
    <molecule id="Q9BZF3-1"/>
    <property type="nucleotide sequence ID" value="XM_047443132.1"/>
</dbReference>
<dbReference type="RefSeq" id="XP_047299108.1">
    <molecule id="Q9BZF3-4"/>
    <property type="nucleotide sequence ID" value="XM_047443152.1"/>
</dbReference>
<dbReference type="RefSeq" id="XP_047299109.1">
    <molecule id="Q9BZF3-4"/>
    <property type="nucleotide sequence ID" value="XM_047443153.1"/>
</dbReference>
<dbReference type="RefSeq" id="XP_047299110.1">
    <molecule id="Q9BZF3-4"/>
    <property type="nucleotide sequence ID" value="XM_047443154.1"/>
</dbReference>
<dbReference type="RefSeq" id="XP_047299111.1">
    <molecule id="Q9BZF3-4"/>
    <property type="nucleotide sequence ID" value="XM_047443155.1"/>
</dbReference>
<dbReference type="RefSeq" id="XP_047299115.1">
    <molecule id="Q9BZF3-2"/>
    <property type="nucleotide sequence ID" value="XM_047443159.1"/>
</dbReference>
<dbReference type="RefSeq" id="XP_047299116.1">
    <molecule id="Q9BZF3-2"/>
    <property type="nucleotide sequence ID" value="XM_047443160.1"/>
</dbReference>
<dbReference type="RefSeq" id="XP_047299125.1">
    <molecule id="Q9BZF3-6"/>
    <property type="nucleotide sequence ID" value="XM_047443169.1"/>
</dbReference>
<dbReference type="RefSeq" id="XP_054196337.1">
    <molecule id="Q9BZF3-5"/>
    <property type="nucleotide sequence ID" value="XM_054340362.1"/>
</dbReference>
<dbReference type="RefSeq" id="XP_054196338.1">
    <molecule id="Q9BZF3-5"/>
    <property type="nucleotide sequence ID" value="XM_054340363.1"/>
</dbReference>
<dbReference type="RefSeq" id="XP_054196339.1">
    <molecule id="Q9BZF3-5"/>
    <property type="nucleotide sequence ID" value="XM_054340364.1"/>
</dbReference>
<dbReference type="RefSeq" id="XP_054196341.1">
    <molecule id="Q9BZF3-1"/>
    <property type="nucleotide sequence ID" value="XM_054340366.1"/>
</dbReference>
<dbReference type="RefSeq" id="XP_054196342.1">
    <molecule id="Q9BZF3-1"/>
    <property type="nucleotide sequence ID" value="XM_054340367.1"/>
</dbReference>
<dbReference type="RefSeq" id="XP_054196343.1">
    <molecule id="Q9BZF3-1"/>
    <property type="nucleotide sequence ID" value="XM_054340368.1"/>
</dbReference>
<dbReference type="RefSeq" id="XP_054196344.1">
    <molecule id="Q9BZF3-1"/>
    <property type="nucleotide sequence ID" value="XM_054340369.1"/>
</dbReference>
<dbReference type="RefSeq" id="XP_054196345.1">
    <molecule id="Q9BZF3-1"/>
    <property type="nucleotide sequence ID" value="XM_054340370.1"/>
</dbReference>
<dbReference type="RefSeq" id="XP_054196346.1">
    <molecule id="Q9BZF3-1"/>
    <property type="nucleotide sequence ID" value="XM_054340371.1"/>
</dbReference>
<dbReference type="RefSeq" id="XP_054196358.1">
    <molecule id="Q9BZF3-4"/>
    <property type="nucleotide sequence ID" value="XM_054340383.1"/>
</dbReference>
<dbReference type="RefSeq" id="XP_054196359.1">
    <molecule id="Q9BZF3-4"/>
    <property type="nucleotide sequence ID" value="XM_054340384.1"/>
</dbReference>
<dbReference type="RefSeq" id="XP_054196360.1">
    <molecule id="Q9BZF3-4"/>
    <property type="nucleotide sequence ID" value="XM_054340385.1"/>
</dbReference>
<dbReference type="RefSeq" id="XP_054196361.1">
    <molecule id="Q9BZF3-4"/>
    <property type="nucleotide sequence ID" value="XM_054340386.1"/>
</dbReference>
<dbReference type="RefSeq" id="XP_054196364.1">
    <molecule id="Q9BZF3-2"/>
    <property type="nucleotide sequence ID" value="XM_054340389.1"/>
</dbReference>
<dbReference type="RefSeq" id="XP_054196365.1">
    <molecule id="Q9BZF3-2"/>
    <property type="nucleotide sequence ID" value="XM_054340390.1"/>
</dbReference>
<dbReference type="RefSeq" id="XP_054196366.1">
    <molecule id="Q9BZF3-2"/>
    <property type="nucleotide sequence ID" value="XM_054340391.1"/>
</dbReference>
<dbReference type="RefSeq" id="XP_054196379.1">
    <molecule id="Q9BZF3-6"/>
    <property type="nucleotide sequence ID" value="XM_054340404.1"/>
</dbReference>
<dbReference type="SMR" id="Q9BZF3"/>
<dbReference type="BioGRID" id="125381">
    <property type="interactions" value="88"/>
</dbReference>
<dbReference type="ELM" id="Q9BZF3"/>
<dbReference type="FunCoup" id="Q9BZF3">
    <property type="interactions" value="1768"/>
</dbReference>
<dbReference type="IntAct" id="Q9BZF3">
    <property type="interactions" value="52"/>
</dbReference>
<dbReference type="MINT" id="Q9BZF3"/>
<dbReference type="STRING" id="9606.ENSP00000376293"/>
<dbReference type="iPTMnet" id="Q9BZF3"/>
<dbReference type="PhosphoSitePlus" id="Q9BZF3"/>
<dbReference type="BioMuta" id="OSBPL6"/>
<dbReference type="DMDM" id="20139133"/>
<dbReference type="jPOST" id="Q9BZF3"/>
<dbReference type="MassIVE" id="Q9BZF3"/>
<dbReference type="PaxDb" id="9606-ENSP00000376293"/>
<dbReference type="PeptideAtlas" id="Q9BZF3"/>
<dbReference type="ProteomicsDB" id="69974"/>
<dbReference type="ProteomicsDB" id="79831">
    <molecule id="Q9BZF3-1"/>
</dbReference>
<dbReference type="ProteomicsDB" id="79832">
    <molecule id="Q9BZF3-2"/>
</dbReference>
<dbReference type="ProteomicsDB" id="79833">
    <molecule id="Q9BZF3-3"/>
</dbReference>
<dbReference type="ProteomicsDB" id="79834">
    <molecule id="Q9BZF3-4"/>
</dbReference>
<dbReference type="ProteomicsDB" id="79835">
    <molecule id="Q9BZF3-5"/>
</dbReference>
<dbReference type="Pumba" id="Q9BZF3"/>
<dbReference type="Antibodypedia" id="33930">
    <property type="antibodies" value="123 antibodies from 23 providers"/>
</dbReference>
<dbReference type="DNASU" id="114880"/>
<dbReference type="Ensembl" id="ENST00000190611.9">
    <molecule id="Q9BZF3-1"/>
    <property type="protein sequence ID" value="ENSP00000190611.4"/>
    <property type="gene ID" value="ENSG00000079156.17"/>
</dbReference>
<dbReference type="Ensembl" id="ENST00000315022.2">
    <molecule id="Q9BZF3-3"/>
    <property type="protein sequence ID" value="ENSP00000318723.2"/>
    <property type="gene ID" value="ENSG00000079156.17"/>
</dbReference>
<dbReference type="Ensembl" id="ENST00000357080.8">
    <molecule id="Q9BZF3-6"/>
    <property type="protein sequence ID" value="ENSP00000349591.4"/>
    <property type="gene ID" value="ENSG00000079156.17"/>
</dbReference>
<dbReference type="Ensembl" id="ENST00000359685.7">
    <molecule id="Q9BZF3-2"/>
    <property type="protein sequence ID" value="ENSP00000352713.3"/>
    <property type="gene ID" value="ENSG00000079156.17"/>
</dbReference>
<dbReference type="Ensembl" id="ENST00000392505.6">
    <molecule id="Q9BZF3-5"/>
    <property type="protein sequence ID" value="ENSP00000376293.2"/>
    <property type="gene ID" value="ENSG00000079156.17"/>
</dbReference>
<dbReference type="Ensembl" id="ENST00000409045.7">
    <molecule id="Q9BZF3-4"/>
    <property type="protein sequence ID" value="ENSP00000387248.3"/>
    <property type="gene ID" value="ENSG00000079156.17"/>
</dbReference>
<dbReference type="Ensembl" id="ENST00000409631.5">
    <molecule id="Q9BZF3-2"/>
    <property type="protein sequence ID" value="ENSP00000386885.1"/>
    <property type="gene ID" value="ENSG00000079156.17"/>
</dbReference>
<dbReference type="GeneID" id="114880"/>
<dbReference type="KEGG" id="hsa:114880"/>
<dbReference type="MANE-Select" id="ENST00000190611.9">
    <property type="protein sequence ID" value="ENSP00000190611.4"/>
    <property type="RefSeq nucleotide sequence ID" value="NM_032523.4"/>
    <property type="RefSeq protein sequence ID" value="NP_115912.1"/>
</dbReference>
<dbReference type="UCSC" id="uc002ulw.4">
    <molecule id="Q9BZF3-1"/>
    <property type="organism name" value="human"/>
</dbReference>
<dbReference type="AGR" id="HGNC:16388"/>
<dbReference type="CTD" id="114880"/>
<dbReference type="DisGeNET" id="114880"/>
<dbReference type="GeneCards" id="OSBPL6"/>
<dbReference type="HGNC" id="HGNC:16388">
    <property type="gene designation" value="OSBPL6"/>
</dbReference>
<dbReference type="HPA" id="ENSG00000079156">
    <property type="expression patterns" value="Tissue enhanced (skeletal muscle, tongue)"/>
</dbReference>
<dbReference type="MIM" id="606734">
    <property type="type" value="gene"/>
</dbReference>
<dbReference type="neXtProt" id="NX_Q9BZF3"/>
<dbReference type="OpenTargets" id="ENSG00000079156"/>
<dbReference type="PharmGKB" id="PA32830"/>
<dbReference type="VEuPathDB" id="HostDB:ENSG00000079156"/>
<dbReference type="eggNOG" id="KOG1737">
    <property type="taxonomic scope" value="Eukaryota"/>
</dbReference>
<dbReference type="GeneTree" id="ENSGT00940000156791"/>
<dbReference type="HOGENOM" id="CLU_007105_4_1_1"/>
<dbReference type="InParanoid" id="Q9BZF3"/>
<dbReference type="OMA" id="RQSLSQX"/>
<dbReference type="OrthoDB" id="1854502at2759"/>
<dbReference type="PAN-GO" id="Q9BZF3">
    <property type="GO annotations" value="6 GO annotations based on evolutionary models"/>
</dbReference>
<dbReference type="PhylomeDB" id="Q9BZF3"/>
<dbReference type="TreeFam" id="TF320922"/>
<dbReference type="PathwayCommons" id="Q9BZF3"/>
<dbReference type="Reactome" id="R-HSA-192105">
    <property type="pathway name" value="Synthesis of bile acids and bile salts"/>
</dbReference>
<dbReference type="SignaLink" id="Q9BZF3"/>
<dbReference type="BioGRID-ORCS" id="114880">
    <property type="hits" value="15 hits in 1164 CRISPR screens"/>
</dbReference>
<dbReference type="ChiTaRS" id="OSBPL6">
    <property type="organism name" value="human"/>
</dbReference>
<dbReference type="GenomeRNAi" id="114880"/>
<dbReference type="Pharos" id="Q9BZF3">
    <property type="development level" value="Tbio"/>
</dbReference>
<dbReference type="PRO" id="PR:Q9BZF3"/>
<dbReference type="Proteomes" id="UP000005640">
    <property type="component" value="Chromosome 2"/>
</dbReference>
<dbReference type="RNAct" id="Q9BZF3">
    <property type="molecule type" value="protein"/>
</dbReference>
<dbReference type="Bgee" id="ENSG00000079156">
    <property type="expression patterns" value="Expressed in bronchial epithelial cell and 180 other cell types or tissues"/>
</dbReference>
<dbReference type="GO" id="GO:0005829">
    <property type="term" value="C:cytosol"/>
    <property type="evidence" value="ECO:0000314"/>
    <property type="project" value="BHF-UCL"/>
</dbReference>
<dbReference type="GO" id="GO:0031901">
    <property type="term" value="C:early endosome membrane"/>
    <property type="evidence" value="ECO:0000314"/>
    <property type="project" value="UniProtKB"/>
</dbReference>
<dbReference type="GO" id="GO:0005789">
    <property type="term" value="C:endoplasmic reticulum membrane"/>
    <property type="evidence" value="ECO:0000314"/>
    <property type="project" value="UniProtKB"/>
</dbReference>
<dbReference type="GO" id="GO:0031965">
    <property type="term" value="C:nuclear membrane"/>
    <property type="evidence" value="ECO:0000314"/>
    <property type="project" value="BHF-UCL"/>
</dbReference>
<dbReference type="GO" id="GO:0097038">
    <property type="term" value="C:perinuclear endoplasmic reticulum"/>
    <property type="evidence" value="ECO:0000314"/>
    <property type="project" value="BHF-UCL"/>
</dbReference>
<dbReference type="GO" id="GO:0005886">
    <property type="term" value="C:plasma membrane"/>
    <property type="evidence" value="ECO:0000314"/>
    <property type="project" value="BHF-UCL"/>
</dbReference>
<dbReference type="GO" id="GO:0015485">
    <property type="term" value="F:cholesterol binding"/>
    <property type="evidence" value="ECO:0000318"/>
    <property type="project" value="GO_Central"/>
</dbReference>
<dbReference type="GO" id="GO:0120015">
    <property type="term" value="F:sterol transfer activity"/>
    <property type="evidence" value="ECO:0000304"/>
    <property type="project" value="Reactome"/>
</dbReference>
<dbReference type="GO" id="GO:0006699">
    <property type="term" value="P:bile acid biosynthetic process"/>
    <property type="evidence" value="ECO:0000304"/>
    <property type="project" value="Reactome"/>
</dbReference>
<dbReference type="GO" id="GO:0032374">
    <property type="term" value="P:regulation of cholesterol transport"/>
    <property type="evidence" value="ECO:0000315"/>
    <property type="project" value="UniProtKB"/>
</dbReference>
<dbReference type="CDD" id="cd13287">
    <property type="entry name" value="PH_ORP3_ORP6_ORP7"/>
    <property type="match status" value="1"/>
</dbReference>
<dbReference type="FunFam" id="2.30.29.30:FF:000011">
    <property type="entry name" value="Oxysterol-binding protein"/>
    <property type="match status" value="1"/>
</dbReference>
<dbReference type="FunFam" id="2.40.160.120:FF:000001">
    <property type="entry name" value="Oxysterol-binding protein"/>
    <property type="match status" value="1"/>
</dbReference>
<dbReference type="FunFam" id="3.30.70.3490:FF:000002">
    <property type="entry name" value="Oxysterol-binding protein"/>
    <property type="match status" value="1"/>
</dbReference>
<dbReference type="Gene3D" id="2.40.160.120">
    <property type="match status" value="1"/>
</dbReference>
<dbReference type="Gene3D" id="3.30.70.3490">
    <property type="match status" value="1"/>
</dbReference>
<dbReference type="Gene3D" id="2.30.29.30">
    <property type="entry name" value="Pleckstrin-homology domain (PH domain)/Phosphotyrosine-binding domain (PTB)"/>
    <property type="match status" value="1"/>
</dbReference>
<dbReference type="InterPro" id="IPR037239">
    <property type="entry name" value="OSBP_sf"/>
</dbReference>
<dbReference type="InterPro" id="IPR000648">
    <property type="entry name" value="Oxysterol-bd"/>
</dbReference>
<dbReference type="InterPro" id="IPR018494">
    <property type="entry name" value="Oxysterol-bd_CS"/>
</dbReference>
<dbReference type="InterPro" id="IPR011993">
    <property type="entry name" value="PH-like_dom_sf"/>
</dbReference>
<dbReference type="InterPro" id="IPR041680">
    <property type="entry name" value="PH_8"/>
</dbReference>
<dbReference type="InterPro" id="IPR001849">
    <property type="entry name" value="PH_domain"/>
</dbReference>
<dbReference type="PANTHER" id="PTHR10972">
    <property type="entry name" value="OXYSTEROL-BINDING PROTEIN-RELATED"/>
    <property type="match status" value="1"/>
</dbReference>
<dbReference type="PANTHER" id="PTHR10972:SF76">
    <property type="entry name" value="OXYSTEROL-BINDING PROTEIN-RELATED PROTEIN 6"/>
    <property type="match status" value="1"/>
</dbReference>
<dbReference type="Pfam" id="PF01237">
    <property type="entry name" value="Oxysterol_BP"/>
    <property type="match status" value="1"/>
</dbReference>
<dbReference type="Pfam" id="PF15409">
    <property type="entry name" value="PH_8"/>
    <property type="match status" value="1"/>
</dbReference>
<dbReference type="SMART" id="SM00233">
    <property type="entry name" value="PH"/>
    <property type="match status" value="1"/>
</dbReference>
<dbReference type="SUPFAM" id="SSF144000">
    <property type="entry name" value="Oxysterol-binding protein-like"/>
    <property type="match status" value="1"/>
</dbReference>
<dbReference type="SUPFAM" id="SSF50729">
    <property type="entry name" value="PH domain-like"/>
    <property type="match status" value="1"/>
</dbReference>
<dbReference type="PROSITE" id="PS01013">
    <property type="entry name" value="OSBP"/>
    <property type="match status" value="1"/>
</dbReference>
<dbReference type="PROSITE" id="PS50003">
    <property type="entry name" value="PH_DOMAIN"/>
    <property type="match status" value="1"/>
</dbReference>
<sequence length="934" mass="106306">MSSDEKGISPAHKTSTPTHRSASSSTSSQRDSRQSIHILERTASSSTEPSVSRQLLEPEPVPLSKEADSWEIIEGLKIGQTNVQKPDKHEGFMLKKRKWPLKGWHKRFFVLDNGMLKYSKAPLDIQKGKVHGSIDVGLSVMSIKKKARRIDLDTEEHIYHLKVKSQDWFDAWVSKLRHHRLYRQNEIVRSPRDASFHIFPSTSTAESSPAANVSVMDGKMQPNSFPWQSPLPCSNSLPATCTTGQSKVAAWLQDSEEMDRCAEDLAHCQSNLVELSKLLQNLEILQRTQSAPNFTDMQANCVDISKKDKRVTRRWRTKSVSKDTKIQLQVPFSATMSPVRLHSSNPNLCADIEFQTPPSHLTDPLESSTDYTKLQEEFCLIAQKVHSLLKSAFNSIAIEKEKLKQMVSEQDHSKGHSTQMARLRQSLSQALNQNAELRSRLNRIHSESIICDQVVSVNIIPSPDEAGEQIHVSLPLSQQVANESRLSMSESVSEFFDAQEVLLSASSSENEASDDESYISDVSDNISEDNTSVADNISRQILNGELTGGAFRNGRRACLPAPCPDTSNINLWNILRNNIGKDLSKVSMPVELNEPLNTLQHLCEEMEYSELLDKASETDDPYERMVLVAAFAVSGYCSTYFRAGSKPFNPVLGETYECIREDKGFRFFSEQVSHHPPISACHCESKNFVFWQDIRWKNKFWGKSMEILPVGTLNVMLPKYGDYYVWNKVTTCIHNILSGRRWIEHYGEVTIRNTKSSVCICKLTFVKVNYWNSNMNEVQGVVIDQEGKAVYRLFGKWHEGLYCGVAPSAKCIWRPGSMPTNYELYYGFTRFAIELNELDPVLKDLLPPTDARFRPDQRFLEEGNLEAAASEKQRVEELQRSRRRYMEENNLEHIPKFFKKVIDANQREAWVSNDTYWELRKDPGFSKVDSPVLW</sequence>
<gene>
    <name type="primary">OSBPL6</name>
    <name type="synonym">ORP6</name>
</gene>
<feature type="initiator methionine" description="Removed" evidence="13">
    <location>
        <position position="1"/>
    </location>
</feature>
<feature type="chain" id="PRO_0000100375" description="Oxysterol-binding protein-related protein 6">
    <location>
        <begin position="2"/>
        <end position="934"/>
    </location>
</feature>
<feature type="domain" description="PH" evidence="2">
    <location>
        <begin position="86"/>
        <end position="181"/>
    </location>
</feature>
<feature type="region of interest" description="Disordered" evidence="3">
    <location>
        <begin position="1"/>
        <end position="62"/>
    </location>
</feature>
<feature type="compositionally biased region" description="Low complexity" evidence="3">
    <location>
        <begin position="14"/>
        <end position="29"/>
    </location>
</feature>
<feature type="compositionally biased region" description="Basic and acidic residues" evidence="3">
    <location>
        <begin position="30"/>
        <end position="40"/>
    </location>
</feature>
<feature type="compositionally biased region" description="Polar residues" evidence="3">
    <location>
        <begin position="42"/>
        <end position="53"/>
    </location>
</feature>
<feature type="modified residue" description="N-acetylserine" evidence="13">
    <location>
        <position position="2"/>
    </location>
</feature>
<feature type="modified residue" description="Phosphoserine" evidence="14">
    <location>
        <position position="35"/>
    </location>
</feature>
<feature type="modified residue" description="Phosphoserine" evidence="14">
    <location>
        <position position="190"/>
    </location>
</feature>
<feature type="modified residue" description="Phosphoserine" evidence="14">
    <location>
        <position position="290"/>
    </location>
</feature>
<feature type="splice variant" id="VSP_036559" description="In isoform 3." evidence="8">
    <original>MSSDEKGISPAHKTSTPTHRSASSSTSSQRDSRQ</original>
    <variation>MHQLSLIRGNRGR</variation>
    <location>
        <begin position="1"/>
        <end position="34"/>
    </location>
</feature>
<feature type="splice variant" id="VSP_036560" description="In isoform 4 and isoform 6." evidence="8 9">
    <location>
        <begin position="298"/>
        <end position="328"/>
    </location>
</feature>
<feature type="splice variant" id="VSP_036561" description="In isoform 3 and isoform 5." evidence="8 11">
    <original>Q</original>
    <variation>QEGPPAKGQFSTTRRRQRLAAAVATT</variation>
    <location>
        <position position="329"/>
    </location>
</feature>
<feature type="splice variant" id="VSP_010013" description="In isoform 2 and isoform 6." evidence="9 10">
    <location>
        <begin position="431"/>
        <end position="466"/>
    </location>
</feature>
<feature type="splice variant" id="VSP_054430" description="In isoform 6." evidence="9">
    <original>ILNGELTGGAFRNGRRACLPAPCPDTSNINLWNIL</original>
    <variation>SMHHLSFQVVLSTCQIATRRLNEQAFPLPRHPHPC</variation>
    <location>
        <begin position="541"/>
        <end position="575"/>
    </location>
</feature>
<feature type="splice variant" id="VSP_054431" description="In isoform 6." evidence="9">
    <location>
        <begin position="576"/>
        <end position="934"/>
    </location>
</feature>
<feature type="sequence variant" id="VAR_057663" description="In dbSNP:rs35032920.">
    <original>R</original>
    <variation>Q</variation>
    <location>
        <position position="53"/>
    </location>
</feature>
<feature type="sequence variant" id="VAR_053550" description="In dbSNP:rs34874235.">
    <original>P</original>
    <variation>L</variation>
    <location>
        <position position="58"/>
    </location>
</feature>
<feature type="sequence conflict" description="In Ref. 4; BAB55223." evidence="12" ref="4">
    <original>S</original>
    <variation>G</variation>
    <location>
        <position position="319"/>
    </location>
</feature>
<feature type="sequence conflict" description="In Ref. 4; BAG62123." evidence="12" ref="4">
    <original>A</original>
    <variation>V</variation>
    <location>
        <position position="350"/>
    </location>
</feature>
<feature type="sequence conflict" description="In Ref. 4; BAC04248." evidence="12" ref="4">
    <original>S</original>
    <variation>P</variation>
    <location>
        <position position="487"/>
    </location>
</feature>
<feature type="sequence conflict" description="In Ref. 4; BAB55223." evidence="12" ref="4">
    <original>N</original>
    <variation>S</variation>
    <location>
        <position position="714"/>
    </location>
</feature>